<comment type="function">
    <text>Required for a novel path of interorganelle communication between mitochondria, peroxisomes and the nucleus, thereby maintaining a functional metabolic interaction between the tricarboxylic acid and glyoxylate cycles. In particular, required for the retrograde expression of the peroxisomal isoform of citrate synthase, CIT2.</text>
</comment>
<comment type="interaction">
    <interactant intactId="EBI-16322">
        <id>P32608</id>
    </interactant>
    <interactant intactId="EBI-10978">
        <id>P34072</id>
        <label>MKS1</label>
    </interactant>
    <organismsDiffer>false</organismsDiffer>
    <experiments>3</experiments>
</comment>
<comment type="interaction">
    <interactant intactId="EBI-16322">
        <id>P32608</id>
    </interactant>
    <interactant intactId="EBI-17958">
        <id>P35177</id>
        <label>SPT7</label>
    </interactant>
    <organismsDiffer>false</organismsDiffer>
    <experiments>2</experiments>
</comment>
<comment type="miscellaneous">
    <text evidence="1">Present with 3260 molecules/cell in log phase SD medium.</text>
</comment>
<comment type="similarity">
    <text evidence="2">Belongs to the GppA/Ppx family.</text>
</comment>
<name>RTG2_YEAST</name>
<reference key="1">
    <citation type="journal article" date="1993" name="Cell">
        <title>RTG1 and RTG2: two yeast genes required for a novel path of communication from mitochondria to the nucleus.</title>
        <authorList>
            <person name="Liao X."/>
            <person name="Butow R.A."/>
        </authorList>
    </citation>
    <scope>NUCLEOTIDE SEQUENCE [GENOMIC DNA]</scope>
</reference>
<reference key="2">
    <citation type="submission" date="1996-04" db="EMBL/GenBank/DDBJ databases">
        <authorList>
            <person name="Jia Y."/>
            <person name="Etherige J."/>
            <person name="Shyjan A."/>
        </authorList>
    </citation>
    <scope>NUCLEOTIDE SEQUENCE [GENOMIC DNA]</scope>
    <source>
        <strain>COP161U7</strain>
    </source>
</reference>
<reference key="3">
    <citation type="journal article" date="1996" name="Yeast">
        <title>Sequence of a 39,411 bp DNA fragment covering the left end of chromosome VII of Saccharomyces cerevisiae.</title>
        <authorList>
            <person name="Coissac E."/>
            <person name="Maillier E."/>
            <person name="Robineau S."/>
            <person name="Netter P."/>
        </authorList>
    </citation>
    <scope>NUCLEOTIDE SEQUENCE [GENOMIC DNA]</scope>
    <source>
        <strain>ATCC 96604 / S288c / FY1679</strain>
    </source>
</reference>
<reference key="4">
    <citation type="journal article" date="1997" name="Nature">
        <title>The nucleotide sequence of Saccharomyces cerevisiae chromosome VII.</title>
        <authorList>
            <person name="Tettelin H."/>
            <person name="Agostoni-Carbone M.L."/>
            <person name="Albermann K."/>
            <person name="Albers M."/>
            <person name="Arroyo J."/>
            <person name="Backes U."/>
            <person name="Barreiros T."/>
            <person name="Bertani I."/>
            <person name="Bjourson A.J."/>
            <person name="Brueckner M."/>
            <person name="Bruschi C.V."/>
            <person name="Carignani G."/>
            <person name="Castagnoli L."/>
            <person name="Cerdan E."/>
            <person name="Clemente M.L."/>
            <person name="Coblenz A."/>
            <person name="Coglievina M."/>
            <person name="Coissac E."/>
            <person name="Defoor E."/>
            <person name="Del Bino S."/>
            <person name="Delius H."/>
            <person name="Delneri D."/>
            <person name="de Wergifosse P."/>
            <person name="Dujon B."/>
            <person name="Durand P."/>
            <person name="Entian K.-D."/>
            <person name="Eraso P."/>
            <person name="Escribano V."/>
            <person name="Fabiani L."/>
            <person name="Fartmann B."/>
            <person name="Feroli F."/>
            <person name="Feuermann M."/>
            <person name="Frontali L."/>
            <person name="Garcia-Gonzalez M."/>
            <person name="Garcia-Saez M.I."/>
            <person name="Goffeau A."/>
            <person name="Guerreiro P."/>
            <person name="Hani J."/>
            <person name="Hansen M."/>
            <person name="Hebling U."/>
            <person name="Hernandez K."/>
            <person name="Heumann K."/>
            <person name="Hilger F."/>
            <person name="Hofmann B."/>
            <person name="Indge K.J."/>
            <person name="James C.M."/>
            <person name="Klima R."/>
            <person name="Koetter P."/>
            <person name="Kramer B."/>
            <person name="Kramer W."/>
            <person name="Lauquin G."/>
            <person name="Leuther H."/>
            <person name="Louis E.J."/>
            <person name="Maillier E."/>
            <person name="Marconi A."/>
            <person name="Martegani E."/>
            <person name="Mazon M.J."/>
            <person name="Mazzoni C."/>
            <person name="McReynolds A.D.K."/>
            <person name="Melchioretto P."/>
            <person name="Mewes H.-W."/>
            <person name="Minenkova O."/>
            <person name="Mueller-Auer S."/>
            <person name="Nawrocki A."/>
            <person name="Netter P."/>
            <person name="Neu R."/>
            <person name="Nombela C."/>
            <person name="Oliver S.G."/>
            <person name="Panzeri L."/>
            <person name="Paoluzi S."/>
            <person name="Plevani P."/>
            <person name="Portetelle D."/>
            <person name="Portillo F."/>
            <person name="Potier S."/>
            <person name="Purnelle B."/>
            <person name="Rieger M."/>
            <person name="Riles L."/>
            <person name="Rinaldi T."/>
            <person name="Robben J."/>
            <person name="Rodrigues-Pousada C."/>
            <person name="Rodriguez-Belmonte E."/>
            <person name="Rodriguez-Torres A.M."/>
            <person name="Rose M."/>
            <person name="Ruzzi M."/>
            <person name="Saliola M."/>
            <person name="Sanchez-Perez M."/>
            <person name="Schaefer B."/>
            <person name="Schaefer M."/>
            <person name="Scharfe M."/>
            <person name="Schmidheini T."/>
            <person name="Schreer A."/>
            <person name="Skala J."/>
            <person name="Souciet J.-L."/>
            <person name="Steensma H.Y."/>
            <person name="Talla E."/>
            <person name="Thierry A."/>
            <person name="Vandenbol M."/>
            <person name="van der Aart Q.J.M."/>
            <person name="Van Dyck L."/>
            <person name="Vanoni M."/>
            <person name="Verhasselt P."/>
            <person name="Voet M."/>
            <person name="Volckaert G."/>
            <person name="Wambutt R."/>
            <person name="Watson M.D."/>
            <person name="Weber N."/>
            <person name="Wedler E."/>
            <person name="Wedler H."/>
            <person name="Wipfli P."/>
            <person name="Wolf K."/>
            <person name="Wright L.F."/>
            <person name="Zaccaria P."/>
            <person name="Zimmermann M."/>
            <person name="Zollner A."/>
            <person name="Kleine K."/>
        </authorList>
    </citation>
    <scope>NUCLEOTIDE SEQUENCE [LARGE SCALE GENOMIC DNA]</scope>
    <source>
        <strain>ATCC 204508 / S288c</strain>
    </source>
</reference>
<reference key="5">
    <citation type="journal article" date="2014" name="G3 (Bethesda)">
        <title>The reference genome sequence of Saccharomyces cerevisiae: Then and now.</title>
        <authorList>
            <person name="Engel S.R."/>
            <person name="Dietrich F.S."/>
            <person name="Fisk D.G."/>
            <person name="Binkley G."/>
            <person name="Balakrishnan R."/>
            <person name="Costanzo M.C."/>
            <person name="Dwight S.S."/>
            <person name="Hitz B.C."/>
            <person name="Karra K."/>
            <person name="Nash R.S."/>
            <person name="Weng S."/>
            <person name="Wong E.D."/>
            <person name="Lloyd P."/>
            <person name="Skrzypek M.S."/>
            <person name="Miyasato S.R."/>
            <person name="Simison M."/>
            <person name="Cherry J.M."/>
        </authorList>
    </citation>
    <scope>GENOME REANNOTATION</scope>
    <source>
        <strain>ATCC 204508 / S288c</strain>
    </source>
</reference>
<reference key="6">
    <citation type="journal article" date="2007" name="Genome Res.">
        <title>Approaching a complete repository of sequence-verified protein-encoding clones for Saccharomyces cerevisiae.</title>
        <authorList>
            <person name="Hu Y."/>
            <person name="Rolfs A."/>
            <person name="Bhullar B."/>
            <person name="Murthy T.V.S."/>
            <person name="Zhu C."/>
            <person name="Berger M.F."/>
            <person name="Camargo A.A."/>
            <person name="Kelley F."/>
            <person name="McCarron S."/>
            <person name="Jepson D."/>
            <person name="Richardson A."/>
            <person name="Raphael J."/>
            <person name="Moreira D."/>
            <person name="Taycher E."/>
            <person name="Zuo D."/>
            <person name="Mohr S."/>
            <person name="Kane M.F."/>
            <person name="Williamson J."/>
            <person name="Simpson A.J.G."/>
            <person name="Bulyk M.L."/>
            <person name="Harlow E."/>
            <person name="Marsischky G."/>
            <person name="Kolodner R.D."/>
            <person name="LaBaer J."/>
        </authorList>
    </citation>
    <scope>NUCLEOTIDE SEQUENCE [GENOMIC DNA]</scope>
    <source>
        <strain>ATCC 204508 / S288c</strain>
    </source>
</reference>
<reference key="7">
    <citation type="journal article" date="2003" name="Nature">
        <title>Global analysis of protein expression in yeast.</title>
        <authorList>
            <person name="Ghaemmaghami S."/>
            <person name="Huh W.-K."/>
            <person name="Bower K."/>
            <person name="Howson R.W."/>
            <person name="Belle A."/>
            <person name="Dephoure N."/>
            <person name="O'Shea E.K."/>
            <person name="Weissman J.S."/>
        </authorList>
    </citation>
    <scope>LEVEL OF PROTEIN EXPRESSION [LARGE SCALE ANALYSIS]</scope>
</reference>
<reference key="8">
    <citation type="journal article" date="2008" name="Mol. Cell. Proteomics">
        <title>A multidimensional chromatography technology for in-depth phosphoproteome analysis.</title>
        <authorList>
            <person name="Albuquerque C.P."/>
            <person name="Smolka M.B."/>
            <person name="Payne S.H."/>
            <person name="Bafna V."/>
            <person name="Eng J."/>
            <person name="Zhou H."/>
        </authorList>
    </citation>
    <scope>IDENTIFICATION BY MASS SPECTROMETRY [LARGE SCALE ANALYSIS]</scope>
</reference>
<sequence>MSTLSDSDTETEVVSRNLCGIVDIGSNGIRFSISSKAAHHARIMPCVFKDRVGLSLYEVQYNTHTNAKCPIPRDIIKEVCSAMKRFKLICDDFGVPETSVRVIATEATRDAINADEFVNAVYGSTGWKVEILGQEDETRVGIYGVVSSFNTVRGLYLDVAGGSTQLSWVISSHGEVKQSSKPVSLPYGAGTLLRRMRTDDNRALFYEIKEAYKDAIEKIGIPQEMIDDAKKEGGFDLWTRGGGLRGMGHLLLYQSEGYPIQTIINGYACTYEEFSSMSDYLFLKQKIPGSSKEHKIFKVSDRRALQLPAVGLFMSAVFEAIPQIKAVHFSEGGVREGSLYSLLPKEIRAQDPLLIASRPYAPLLTEKYLYLLRTSIPQEDIPEIVNERIAPALCNLAFVHASYPKELQPTAALHVATRGIIAGCHGLSHRARALIGIALCSRWGGNIPESEEKYSQELEQVVLREGDKAEALRIVWWTKYIGTIMYVICGVHPGGNIRDNVFDFHVSKRSEVETSLKELIIDDANTTKVKEESTRKNRGYEVVVRISKDDLKTSASVRSRIITLQKKVRKLSRGSVERVKIGVQFYEE</sequence>
<evidence type="ECO:0000269" key="1">
    <source>
    </source>
</evidence>
<evidence type="ECO:0000305" key="2"/>
<organism>
    <name type="scientific">Saccharomyces cerevisiae (strain ATCC 204508 / S288c)</name>
    <name type="common">Baker's yeast</name>
    <dbReference type="NCBI Taxonomy" id="559292"/>
    <lineage>
        <taxon>Eukaryota</taxon>
        <taxon>Fungi</taxon>
        <taxon>Dikarya</taxon>
        <taxon>Ascomycota</taxon>
        <taxon>Saccharomycotina</taxon>
        <taxon>Saccharomycetes</taxon>
        <taxon>Saccharomycetales</taxon>
        <taxon>Saccharomycetaceae</taxon>
        <taxon>Saccharomyces</taxon>
    </lineage>
</organism>
<gene>
    <name type="primary">RTG2</name>
    <name type="ordered locus">YGL252C</name>
    <name type="ORF">NRF588</name>
</gene>
<protein>
    <recommendedName>
        <fullName>Retrograde regulation protein 2</fullName>
    </recommendedName>
</protein>
<proteinExistence type="evidence at protein level"/>
<accession>P32608</accession>
<accession>D6VV83</accession>
<dbReference type="EMBL" id="M97691">
    <property type="protein sequence ID" value="AAA96809.1"/>
    <property type="molecule type" value="Genomic_DNA"/>
</dbReference>
<dbReference type="EMBL" id="X94357">
    <property type="protein sequence ID" value="CAA64135.1"/>
    <property type="molecule type" value="Genomic_DNA"/>
</dbReference>
<dbReference type="EMBL" id="Z72774">
    <property type="protein sequence ID" value="CAA96972.1"/>
    <property type="molecule type" value="Genomic_DNA"/>
</dbReference>
<dbReference type="EMBL" id="AY692809">
    <property type="protein sequence ID" value="AAT92828.1"/>
    <property type="molecule type" value="Genomic_DNA"/>
</dbReference>
<dbReference type="EMBL" id="BK006941">
    <property type="protein sequence ID" value="DAA07867.1"/>
    <property type="molecule type" value="Genomic_DNA"/>
</dbReference>
<dbReference type="PIR" id="S61609">
    <property type="entry name" value="S61609"/>
</dbReference>
<dbReference type="RefSeq" id="NP_011262.1">
    <property type="nucleotide sequence ID" value="NM_001181118.1"/>
</dbReference>
<dbReference type="SMR" id="P32608"/>
<dbReference type="BioGRID" id="33027">
    <property type="interactions" value="476"/>
</dbReference>
<dbReference type="DIP" id="DIP-6826N"/>
<dbReference type="FunCoup" id="P32608">
    <property type="interactions" value="338"/>
</dbReference>
<dbReference type="IntAct" id="P32608">
    <property type="interactions" value="22"/>
</dbReference>
<dbReference type="MINT" id="P32608"/>
<dbReference type="STRING" id="4932.YGL252C"/>
<dbReference type="iPTMnet" id="P32608"/>
<dbReference type="PaxDb" id="4932-YGL252C"/>
<dbReference type="PeptideAtlas" id="P32608"/>
<dbReference type="EnsemblFungi" id="YGL252C_mRNA">
    <property type="protein sequence ID" value="YGL252C"/>
    <property type="gene ID" value="YGL252C"/>
</dbReference>
<dbReference type="GeneID" id="852640"/>
<dbReference type="KEGG" id="sce:YGL252C"/>
<dbReference type="AGR" id="SGD:S000003221"/>
<dbReference type="SGD" id="S000003221">
    <property type="gene designation" value="RTG2"/>
</dbReference>
<dbReference type="VEuPathDB" id="FungiDB:YGL252C"/>
<dbReference type="eggNOG" id="ENOG502QRXN">
    <property type="taxonomic scope" value="Eukaryota"/>
</dbReference>
<dbReference type="HOGENOM" id="CLU_033165_0_0_1"/>
<dbReference type="InParanoid" id="P32608"/>
<dbReference type="OMA" id="SMQMTWI"/>
<dbReference type="OrthoDB" id="2014654at2759"/>
<dbReference type="BioCyc" id="YEAST:G3O-30722-MONOMER"/>
<dbReference type="BioGRID-ORCS" id="852640">
    <property type="hits" value="8 hits in 10 CRISPR screens"/>
</dbReference>
<dbReference type="PRO" id="PR:P32608"/>
<dbReference type="Proteomes" id="UP000002311">
    <property type="component" value="Chromosome VII"/>
</dbReference>
<dbReference type="RNAct" id="P32608">
    <property type="molecule type" value="protein"/>
</dbReference>
<dbReference type="GO" id="GO:0005737">
    <property type="term" value="C:cytoplasm"/>
    <property type="evidence" value="ECO:0000314"/>
    <property type="project" value="SGD"/>
</dbReference>
<dbReference type="GO" id="GO:0000791">
    <property type="term" value="C:euchromatin"/>
    <property type="evidence" value="ECO:0000314"/>
    <property type="project" value="SGD"/>
</dbReference>
<dbReference type="GO" id="GO:0051219">
    <property type="term" value="F:phosphoprotein binding"/>
    <property type="evidence" value="ECO:0000314"/>
    <property type="project" value="SGD"/>
</dbReference>
<dbReference type="GO" id="GO:0035753">
    <property type="term" value="P:maintenance of DNA trinucleotide repeats"/>
    <property type="evidence" value="ECO:0000315"/>
    <property type="project" value="SGD"/>
</dbReference>
<dbReference type="GO" id="GO:0031930">
    <property type="term" value="P:mitochondria-nucleus signaling pathway"/>
    <property type="evidence" value="ECO:0000315"/>
    <property type="project" value="SGD"/>
</dbReference>
<dbReference type="GO" id="GO:0045944">
    <property type="term" value="P:positive regulation of transcription by RNA polymerase II"/>
    <property type="evidence" value="ECO:0000314"/>
    <property type="project" value="SGD"/>
</dbReference>
<dbReference type="GO" id="GO:0006606">
    <property type="term" value="P:protein import into nucleus"/>
    <property type="evidence" value="ECO:0000315"/>
    <property type="project" value="SGD"/>
</dbReference>
<dbReference type="GO" id="GO:0034504">
    <property type="term" value="P:protein localization to nucleus"/>
    <property type="evidence" value="ECO:0000315"/>
    <property type="project" value="SGD"/>
</dbReference>
<dbReference type="GO" id="GO:0006357">
    <property type="term" value="P:regulation of transcription by RNA polymerase II"/>
    <property type="evidence" value="ECO:0000315"/>
    <property type="project" value="SGD"/>
</dbReference>
<dbReference type="FunFam" id="3.30.420.150:FF:000007">
    <property type="entry name" value="Retrograde regulation protein 2"/>
    <property type="match status" value="1"/>
</dbReference>
<dbReference type="FunFam" id="3.30.420.40:FF:000191">
    <property type="entry name" value="Retrograde regulation protein 2"/>
    <property type="match status" value="1"/>
</dbReference>
<dbReference type="Gene3D" id="3.30.420.40">
    <property type="match status" value="1"/>
</dbReference>
<dbReference type="Gene3D" id="3.30.420.150">
    <property type="entry name" value="Exopolyphosphatase. Domain 2"/>
    <property type="match status" value="1"/>
</dbReference>
<dbReference type="InterPro" id="IPR043129">
    <property type="entry name" value="ATPase_NBD"/>
</dbReference>
<dbReference type="InterPro" id="IPR050273">
    <property type="entry name" value="GppA/Ppx_hydrolase"/>
</dbReference>
<dbReference type="InterPro" id="IPR003695">
    <property type="entry name" value="Ppx_GppA_N"/>
</dbReference>
<dbReference type="PANTHER" id="PTHR30005">
    <property type="entry name" value="EXOPOLYPHOSPHATASE"/>
    <property type="match status" value="1"/>
</dbReference>
<dbReference type="PANTHER" id="PTHR30005:SF0">
    <property type="entry name" value="RETROGRADE REGULATION PROTEIN 2"/>
    <property type="match status" value="1"/>
</dbReference>
<dbReference type="Pfam" id="PF02541">
    <property type="entry name" value="Ppx-GppA"/>
    <property type="match status" value="1"/>
</dbReference>
<dbReference type="Pfam" id="PF23566">
    <property type="entry name" value="RTG2_C"/>
    <property type="match status" value="1"/>
</dbReference>
<dbReference type="SUPFAM" id="SSF53067">
    <property type="entry name" value="Actin-like ATPase domain"/>
    <property type="match status" value="2"/>
</dbReference>
<feature type="chain" id="PRO_0000194312" description="Retrograde regulation protein 2">
    <location>
        <begin position="1"/>
        <end position="588"/>
    </location>
</feature>
<keyword id="KW-1185">Reference proteome</keyword>